<sequence>MRYTILTKGDSKSNALKHKMMNYMKDFRMIEDSENPEIVISVGGDGTLLQAFHQYSHMLSKVAFVGVHTGHLGFYADWLPHEVEKLIIEINNSEFQVIEYPLLEIIMRYNDNGYETRYLALNEATMKTENGSTLVVDVNLRGKHFERFRGDGLCVSTPSGSTAYNKALGGALIHPSLEAMQITEIASINNRVFRTVGSPLVLPKHHTCLISPVNHDTIRMTIDHVSIKHKNVNSIQYRVANEKVRFARFRPFPFWKRVHDSFISSDEER</sequence>
<proteinExistence type="inferred from homology"/>
<comment type="function">
    <text evidence="1">Involved in the regulation of the intracellular balance of NAD and NADP, and is a key enzyme in the biosynthesis of NADP. Catalyzes specifically the phosphorylation on 2'-hydroxyl of the adenosine moiety of NAD to yield NADP.</text>
</comment>
<comment type="catalytic activity">
    <reaction evidence="1">
        <text>NAD(+) + ATP = ADP + NADP(+) + H(+)</text>
        <dbReference type="Rhea" id="RHEA:18629"/>
        <dbReference type="ChEBI" id="CHEBI:15378"/>
        <dbReference type="ChEBI" id="CHEBI:30616"/>
        <dbReference type="ChEBI" id="CHEBI:57540"/>
        <dbReference type="ChEBI" id="CHEBI:58349"/>
        <dbReference type="ChEBI" id="CHEBI:456216"/>
        <dbReference type="EC" id="2.7.1.23"/>
    </reaction>
</comment>
<comment type="cofactor">
    <cofactor evidence="1">
        <name>a divalent metal cation</name>
        <dbReference type="ChEBI" id="CHEBI:60240"/>
    </cofactor>
</comment>
<comment type="subcellular location">
    <subcellularLocation>
        <location evidence="1">Cytoplasm</location>
    </subcellularLocation>
</comment>
<comment type="similarity">
    <text evidence="1">Belongs to the NAD kinase family.</text>
</comment>
<evidence type="ECO:0000255" key="1">
    <source>
        <dbReference type="HAMAP-Rule" id="MF_00361"/>
    </source>
</evidence>
<reference key="1">
    <citation type="journal article" date="2007" name="BMC Microbiol.">
        <title>Subtle genetic changes enhance virulence of methicillin resistant and sensitive Staphylococcus aureus.</title>
        <authorList>
            <person name="Highlander S.K."/>
            <person name="Hulten K.G."/>
            <person name="Qin X."/>
            <person name="Jiang H."/>
            <person name="Yerrapragada S."/>
            <person name="Mason E.O. Jr."/>
            <person name="Shang Y."/>
            <person name="Williams T.M."/>
            <person name="Fortunov R.M."/>
            <person name="Liu Y."/>
            <person name="Igboeli O."/>
            <person name="Petrosino J."/>
            <person name="Tirumalai M."/>
            <person name="Uzman A."/>
            <person name="Fox G.E."/>
            <person name="Cardenas A.M."/>
            <person name="Muzny D.M."/>
            <person name="Hemphill L."/>
            <person name="Ding Y."/>
            <person name="Dugan S."/>
            <person name="Blyth P.R."/>
            <person name="Buhay C.J."/>
            <person name="Dinh H.H."/>
            <person name="Hawes A.C."/>
            <person name="Holder M."/>
            <person name="Kovar C.L."/>
            <person name="Lee S.L."/>
            <person name="Liu W."/>
            <person name="Nazareth L.V."/>
            <person name="Wang Q."/>
            <person name="Zhou J."/>
            <person name="Kaplan S.L."/>
            <person name="Weinstock G.M."/>
        </authorList>
    </citation>
    <scope>NUCLEOTIDE SEQUENCE [LARGE SCALE GENOMIC DNA]</scope>
    <source>
        <strain>USA300 / TCH1516</strain>
    </source>
</reference>
<protein>
    <recommendedName>
        <fullName evidence="1">NAD kinase</fullName>
        <ecNumber evidence="1">2.7.1.23</ecNumber>
    </recommendedName>
    <alternativeName>
        <fullName evidence="1">ATP-dependent NAD kinase</fullName>
    </alternativeName>
</protein>
<name>NADK_STAAT</name>
<organism>
    <name type="scientific">Staphylococcus aureus (strain USA300 / TCH1516)</name>
    <dbReference type="NCBI Taxonomy" id="451516"/>
    <lineage>
        <taxon>Bacteria</taxon>
        <taxon>Bacillati</taxon>
        <taxon>Bacillota</taxon>
        <taxon>Bacilli</taxon>
        <taxon>Bacillales</taxon>
        <taxon>Staphylococcaceae</taxon>
        <taxon>Staphylococcus</taxon>
    </lineage>
</organism>
<gene>
    <name evidence="1" type="primary">nadK</name>
    <name type="ordered locus">USA300HOU_0964</name>
</gene>
<feature type="chain" id="PRO_1000079524" description="NAD kinase">
    <location>
        <begin position="1"/>
        <end position="269"/>
    </location>
</feature>
<feature type="active site" description="Proton acceptor" evidence="1">
    <location>
        <position position="45"/>
    </location>
</feature>
<feature type="binding site" evidence="1">
    <location>
        <begin position="45"/>
        <end position="46"/>
    </location>
    <ligand>
        <name>NAD(+)</name>
        <dbReference type="ChEBI" id="CHEBI:57540"/>
    </ligand>
</feature>
<feature type="binding site" evidence="1">
    <location>
        <begin position="122"/>
        <end position="123"/>
    </location>
    <ligand>
        <name>NAD(+)</name>
        <dbReference type="ChEBI" id="CHEBI:57540"/>
    </ligand>
</feature>
<feature type="binding site" evidence="1">
    <location>
        <position position="149"/>
    </location>
    <ligand>
        <name>NAD(+)</name>
        <dbReference type="ChEBI" id="CHEBI:57540"/>
    </ligand>
</feature>
<feature type="binding site" evidence="1">
    <location>
        <position position="151"/>
    </location>
    <ligand>
        <name>NAD(+)</name>
        <dbReference type="ChEBI" id="CHEBI:57540"/>
    </ligand>
</feature>
<feature type="binding site" evidence="1">
    <location>
        <position position="186"/>
    </location>
    <ligand>
        <name>NAD(+)</name>
        <dbReference type="ChEBI" id="CHEBI:57540"/>
    </ligand>
</feature>
<keyword id="KW-0067">ATP-binding</keyword>
<keyword id="KW-0963">Cytoplasm</keyword>
<keyword id="KW-0418">Kinase</keyword>
<keyword id="KW-0520">NAD</keyword>
<keyword id="KW-0521">NADP</keyword>
<keyword id="KW-0547">Nucleotide-binding</keyword>
<keyword id="KW-0808">Transferase</keyword>
<accession>A8Z0B0</accession>
<dbReference type="EC" id="2.7.1.23" evidence="1"/>
<dbReference type="EMBL" id="CP000730">
    <property type="protein sequence ID" value="ABX28984.1"/>
    <property type="molecule type" value="Genomic_DNA"/>
</dbReference>
<dbReference type="RefSeq" id="WP_001270834.1">
    <property type="nucleotide sequence ID" value="NC_010079.1"/>
</dbReference>
<dbReference type="SMR" id="A8Z0B0"/>
<dbReference type="KEGG" id="sax:USA300HOU_0964"/>
<dbReference type="HOGENOM" id="CLU_008831_0_3_9"/>
<dbReference type="GO" id="GO:0005737">
    <property type="term" value="C:cytoplasm"/>
    <property type="evidence" value="ECO:0007669"/>
    <property type="project" value="UniProtKB-SubCell"/>
</dbReference>
<dbReference type="GO" id="GO:0005524">
    <property type="term" value="F:ATP binding"/>
    <property type="evidence" value="ECO:0007669"/>
    <property type="project" value="UniProtKB-KW"/>
</dbReference>
<dbReference type="GO" id="GO:0046872">
    <property type="term" value="F:metal ion binding"/>
    <property type="evidence" value="ECO:0007669"/>
    <property type="project" value="UniProtKB-UniRule"/>
</dbReference>
<dbReference type="GO" id="GO:0051287">
    <property type="term" value="F:NAD binding"/>
    <property type="evidence" value="ECO:0007669"/>
    <property type="project" value="UniProtKB-ARBA"/>
</dbReference>
<dbReference type="GO" id="GO:0003951">
    <property type="term" value="F:NAD+ kinase activity"/>
    <property type="evidence" value="ECO:0007669"/>
    <property type="project" value="UniProtKB-UniRule"/>
</dbReference>
<dbReference type="GO" id="GO:0019674">
    <property type="term" value="P:NAD metabolic process"/>
    <property type="evidence" value="ECO:0007669"/>
    <property type="project" value="InterPro"/>
</dbReference>
<dbReference type="GO" id="GO:0006741">
    <property type="term" value="P:NADP biosynthetic process"/>
    <property type="evidence" value="ECO:0007669"/>
    <property type="project" value="UniProtKB-UniRule"/>
</dbReference>
<dbReference type="FunFam" id="2.60.200.30:FF:000002">
    <property type="entry name" value="NAD kinase"/>
    <property type="match status" value="1"/>
</dbReference>
<dbReference type="Gene3D" id="3.40.50.10330">
    <property type="entry name" value="Probable inorganic polyphosphate/atp-NAD kinase, domain 1"/>
    <property type="match status" value="1"/>
</dbReference>
<dbReference type="Gene3D" id="2.60.200.30">
    <property type="entry name" value="Probable inorganic polyphosphate/atp-NAD kinase, domain 2"/>
    <property type="match status" value="1"/>
</dbReference>
<dbReference type="HAMAP" id="MF_00361">
    <property type="entry name" value="NAD_kinase"/>
    <property type="match status" value="1"/>
</dbReference>
<dbReference type="InterPro" id="IPR017438">
    <property type="entry name" value="ATP-NAD_kinase_N"/>
</dbReference>
<dbReference type="InterPro" id="IPR017437">
    <property type="entry name" value="ATP-NAD_kinase_PpnK-typ_C"/>
</dbReference>
<dbReference type="InterPro" id="IPR016064">
    <property type="entry name" value="NAD/diacylglycerol_kinase_sf"/>
</dbReference>
<dbReference type="InterPro" id="IPR002504">
    <property type="entry name" value="NADK"/>
</dbReference>
<dbReference type="NCBIfam" id="NF003424">
    <property type="entry name" value="PRK04885.1"/>
    <property type="match status" value="1"/>
</dbReference>
<dbReference type="PANTHER" id="PTHR20275">
    <property type="entry name" value="NAD KINASE"/>
    <property type="match status" value="1"/>
</dbReference>
<dbReference type="PANTHER" id="PTHR20275:SF0">
    <property type="entry name" value="NAD KINASE"/>
    <property type="match status" value="1"/>
</dbReference>
<dbReference type="Pfam" id="PF01513">
    <property type="entry name" value="NAD_kinase"/>
    <property type="match status" value="1"/>
</dbReference>
<dbReference type="Pfam" id="PF20143">
    <property type="entry name" value="NAD_kinase_C"/>
    <property type="match status" value="1"/>
</dbReference>
<dbReference type="SUPFAM" id="SSF111331">
    <property type="entry name" value="NAD kinase/diacylglycerol kinase-like"/>
    <property type="match status" value="1"/>
</dbReference>